<organism>
    <name type="scientific">Bartonella henselae (strain ATCC 49882 / DSM 28221 / CCUG 30454 / Houston 1)</name>
    <name type="common">Rochalimaea henselae</name>
    <dbReference type="NCBI Taxonomy" id="283166"/>
    <lineage>
        <taxon>Bacteria</taxon>
        <taxon>Pseudomonadati</taxon>
        <taxon>Pseudomonadota</taxon>
        <taxon>Alphaproteobacteria</taxon>
        <taxon>Hyphomicrobiales</taxon>
        <taxon>Bartonellaceae</taxon>
        <taxon>Bartonella</taxon>
    </lineage>
</organism>
<sequence>MPSYRSRISTHGRNMAGARSLWRATGMKESDFGKPIIAIANSFTQFVPGHVHLKDLGQLVAQQIVASGGIAKEFNTIAIDDGIAMGHDGMLYSLPSREIIADSVEYMINAHCADALVCISNCDKITPGMLMASLRLNIPTIFVSGGPMEAGKIKWKDQDLTVDLVDAMVAAAAENNSEEEVAEMERAACPTCGSCSGMFTANSMNCLTEALGLSLPGNGSMLATHADRQMLFEEAGRQIVTLVKRYYEKGDETVLPRSIASRKAFENAMTVDISMGGSTNTVLHLLAAAQEGEVDFTMTEIDRLSRRVPVLCKVAPAVANVHMEDVHRAGGIMGLLGELDAVGLIDTSAYTVHAKTMKEALCRWDVKRTNEPKTHEFYRAAPGGISTQTAFSQSRRYDSLDLDREKGIIRDKEHAYSQDGGLAVLYGNLAKDGCIVKTAGVDQSILTFKGPARIFESQDSAVSAILNDTIQSGDIVLIRYEGPRGGPGMQEMLYPTSYLKSKGLGKVCALITDGRFSGGTSGLSIGHVSPEAAEGGAIALVEEGDIIEIDIPNRTIHMLVEDDELMHRRVKMEAKGKAAWQPTEKRKRKVSKALKAYAAMTTSAAKGAVRNI</sequence>
<reference key="1">
    <citation type="journal article" date="2004" name="Proc. Natl. Acad. Sci. U.S.A.">
        <title>The louse-borne human pathogen Bartonella quintana is a genomic derivative of the zoonotic agent Bartonella henselae.</title>
        <authorList>
            <person name="Alsmark U.C.M."/>
            <person name="Frank A.C."/>
            <person name="Karlberg E.O."/>
            <person name="Legault B.-A."/>
            <person name="Ardell D.H."/>
            <person name="Canbaeck B."/>
            <person name="Eriksson A.-S."/>
            <person name="Naeslund A.K."/>
            <person name="Handley S.A."/>
            <person name="Huvet M."/>
            <person name="La Scola B."/>
            <person name="Holmberg M."/>
            <person name="Andersson S.G.E."/>
        </authorList>
    </citation>
    <scope>NUCLEOTIDE SEQUENCE [LARGE SCALE GENOMIC DNA]</scope>
    <source>
        <strain>ATCC 49882 / DSM 28221 / CCUG 30454 / Houston 1</strain>
    </source>
</reference>
<dbReference type="EC" id="4.2.1.9" evidence="1"/>
<dbReference type="EMBL" id="BX897699">
    <property type="protein sequence ID" value="CAF26913.1"/>
    <property type="molecule type" value="Genomic_DNA"/>
</dbReference>
<dbReference type="RefSeq" id="WP_011180058.1">
    <property type="nucleotide sequence ID" value="NZ_LRIJ02000001.1"/>
</dbReference>
<dbReference type="SMR" id="Q6G543"/>
<dbReference type="PaxDb" id="283166-BH00980"/>
<dbReference type="EnsemblBacteria" id="CAF26913">
    <property type="protein sequence ID" value="CAF26913"/>
    <property type="gene ID" value="BH00980"/>
</dbReference>
<dbReference type="GeneID" id="92986384"/>
<dbReference type="KEGG" id="bhe:BH00980"/>
<dbReference type="eggNOG" id="COG0129">
    <property type="taxonomic scope" value="Bacteria"/>
</dbReference>
<dbReference type="OrthoDB" id="9807077at2"/>
<dbReference type="UniPathway" id="UPA00047">
    <property type="reaction ID" value="UER00057"/>
</dbReference>
<dbReference type="UniPathway" id="UPA00049">
    <property type="reaction ID" value="UER00061"/>
</dbReference>
<dbReference type="Proteomes" id="UP000000421">
    <property type="component" value="Chromosome"/>
</dbReference>
<dbReference type="GO" id="GO:0005829">
    <property type="term" value="C:cytosol"/>
    <property type="evidence" value="ECO:0007669"/>
    <property type="project" value="TreeGrafter"/>
</dbReference>
<dbReference type="GO" id="GO:0051537">
    <property type="term" value="F:2 iron, 2 sulfur cluster binding"/>
    <property type="evidence" value="ECO:0007669"/>
    <property type="project" value="UniProtKB-UniRule"/>
</dbReference>
<dbReference type="GO" id="GO:0004160">
    <property type="term" value="F:dihydroxy-acid dehydratase activity"/>
    <property type="evidence" value="ECO:0007669"/>
    <property type="project" value="UniProtKB-UniRule"/>
</dbReference>
<dbReference type="GO" id="GO:0000287">
    <property type="term" value="F:magnesium ion binding"/>
    <property type="evidence" value="ECO:0007669"/>
    <property type="project" value="UniProtKB-UniRule"/>
</dbReference>
<dbReference type="GO" id="GO:0009097">
    <property type="term" value="P:isoleucine biosynthetic process"/>
    <property type="evidence" value="ECO:0007669"/>
    <property type="project" value="UniProtKB-UniRule"/>
</dbReference>
<dbReference type="GO" id="GO:0009099">
    <property type="term" value="P:L-valine biosynthetic process"/>
    <property type="evidence" value="ECO:0007669"/>
    <property type="project" value="UniProtKB-UniRule"/>
</dbReference>
<dbReference type="FunFam" id="3.50.30.80:FF:000001">
    <property type="entry name" value="Dihydroxy-acid dehydratase"/>
    <property type="match status" value="1"/>
</dbReference>
<dbReference type="Gene3D" id="3.50.30.80">
    <property type="entry name" value="IlvD/EDD C-terminal domain-like"/>
    <property type="match status" value="1"/>
</dbReference>
<dbReference type="HAMAP" id="MF_00012">
    <property type="entry name" value="IlvD"/>
    <property type="match status" value="1"/>
</dbReference>
<dbReference type="InterPro" id="IPR042096">
    <property type="entry name" value="Dihydro-acid_dehy_C"/>
</dbReference>
<dbReference type="InterPro" id="IPR004404">
    <property type="entry name" value="DihydroxyA_deHydtase"/>
</dbReference>
<dbReference type="InterPro" id="IPR020558">
    <property type="entry name" value="DiOHA_6PGluconate_deHydtase_CS"/>
</dbReference>
<dbReference type="InterPro" id="IPR056740">
    <property type="entry name" value="ILV_EDD_C"/>
</dbReference>
<dbReference type="InterPro" id="IPR000581">
    <property type="entry name" value="ILV_EDD_N"/>
</dbReference>
<dbReference type="InterPro" id="IPR037237">
    <property type="entry name" value="IlvD/EDD_N"/>
</dbReference>
<dbReference type="NCBIfam" id="TIGR00110">
    <property type="entry name" value="ilvD"/>
    <property type="match status" value="1"/>
</dbReference>
<dbReference type="NCBIfam" id="NF009103">
    <property type="entry name" value="PRK12448.1"/>
    <property type="match status" value="1"/>
</dbReference>
<dbReference type="PANTHER" id="PTHR43661">
    <property type="entry name" value="D-XYLONATE DEHYDRATASE"/>
    <property type="match status" value="1"/>
</dbReference>
<dbReference type="PANTHER" id="PTHR43661:SF3">
    <property type="entry name" value="D-XYLONATE DEHYDRATASE YAGF-RELATED"/>
    <property type="match status" value="1"/>
</dbReference>
<dbReference type="Pfam" id="PF24877">
    <property type="entry name" value="ILV_EDD_C"/>
    <property type="match status" value="1"/>
</dbReference>
<dbReference type="Pfam" id="PF00920">
    <property type="entry name" value="ILVD_EDD_N"/>
    <property type="match status" value="1"/>
</dbReference>
<dbReference type="SUPFAM" id="SSF143975">
    <property type="entry name" value="IlvD/EDD N-terminal domain-like"/>
    <property type="match status" value="1"/>
</dbReference>
<dbReference type="SUPFAM" id="SSF52016">
    <property type="entry name" value="LeuD/IlvD-like"/>
    <property type="match status" value="1"/>
</dbReference>
<dbReference type="PROSITE" id="PS00886">
    <property type="entry name" value="ILVD_EDD_1"/>
    <property type="match status" value="1"/>
</dbReference>
<dbReference type="PROSITE" id="PS00887">
    <property type="entry name" value="ILVD_EDD_2"/>
    <property type="match status" value="1"/>
</dbReference>
<accession>Q6G543</accession>
<feature type="chain" id="PRO_0000225373" description="Dihydroxy-acid dehydratase">
    <location>
        <begin position="1"/>
        <end position="612"/>
    </location>
</feature>
<feature type="active site" description="Proton acceptor" evidence="1">
    <location>
        <position position="517"/>
    </location>
</feature>
<feature type="binding site" evidence="1">
    <location>
        <position position="81"/>
    </location>
    <ligand>
        <name>Mg(2+)</name>
        <dbReference type="ChEBI" id="CHEBI:18420"/>
    </ligand>
</feature>
<feature type="binding site" evidence="1">
    <location>
        <position position="122"/>
    </location>
    <ligand>
        <name>[2Fe-2S] cluster</name>
        <dbReference type="ChEBI" id="CHEBI:190135"/>
    </ligand>
</feature>
<feature type="binding site" evidence="1">
    <location>
        <position position="123"/>
    </location>
    <ligand>
        <name>Mg(2+)</name>
        <dbReference type="ChEBI" id="CHEBI:18420"/>
    </ligand>
</feature>
<feature type="binding site" description="via carbamate group" evidence="1">
    <location>
        <position position="124"/>
    </location>
    <ligand>
        <name>Mg(2+)</name>
        <dbReference type="ChEBI" id="CHEBI:18420"/>
    </ligand>
</feature>
<feature type="binding site" evidence="1">
    <location>
        <position position="195"/>
    </location>
    <ligand>
        <name>[2Fe-2S] cluster</name>
        <dbReference type="ChEBI" id="CHEBI:190135"/>
    </ligand>
</feature>
<feature type="binding site" evidence="1">
    <location>
        <position position="491"/>
    </location>
    <ligand>
        <name>Mg(2+)</name>
        <dbReference type="ChEBI" id="CHEBI:18420"/>
    </ligand>
</feature>
<feature type="modified residue" description="N6-carboxylysine" evidence="1">
    <location>
        <position position="124"/>
    </location>
</feature>
<protein>
    <recommendedName>
        <fullName evidence="1">Dihydroxy-acid dehydratase</fullName>
        <shortName evidence="1">DAD</shortName>
        <ecNumber evidence="1">4.2.1.9</ecNumber>
    </recommendedName>
</protein>
<evidence type="ECO:0000255" key="1">
    <source>
        <dbReference type="HAMAP-Rule" id="MF_00012"/>
    </source>
</evidence>
<name>ILVD_BARHE</name>
<keyword id="KW-0001">2Fe-2S</keyword>
<keyword id="KW-0028">Amino-acid biosynthesis</keyword>
<keyword id="KW-0100">Branched-chain amino acid biosynthesis</keyword>
<keyword id="KW-0408">Iron</keyword>
<keyword id="KW-0411">Iron-sulfur</keyword>
<keyword id="KW-0456">Lyase</keyword>
<keyword id="KW-0460">Magnesium</keyword>
<keyword id="KW-0479">Metal-binding</keyword>
<gene>
    <name evidence="1" type="primary">ilvD</name>
    <name type="ordered locus">BH00980</name>
</gene>
<proteinExistence type="inferred from homology"/>
<comment type="function">
    <text evidence="1">Functions in the biosynthesis of branched-chain amino acids. Catalyzes the dehydration of (2R,3R)-2,3-dihydroxy-3-methylpentanoate (2,3-dihydroxy-3-methylvalerate) into 2-oxo-3-methylpentanoate (2-oxo-3-methylvalerate) and of (2R)-2,3-dihydroxy-3-methylbutanoate (2,3-dihydroxyisovalerate) into 2-oxo-3-methylbutanoate (2-oxoisovalerate), the penultimate precursor to L-isoleucine and L-valine, respectively.</text>
</comment>
<comment type="catalytic activity">
    <reaction evidence="1">
        <text>(2R)-2,3-dihydroxy-3-methylbutanoate = 3-methyl-2-oxobutanoate + H2O</text>
        <dbReference type="Rhea" id="RHEA:24809"/>
        <dbReference type="ChEBI" id="CHEBI:11851"/>
        <dbReference type="ChEBI" id="CHEBI:15377"/>
        <dbReference type="ChEBI" id="CHEBI:49072"/>
        <dbReference type="EC" id="4.2.1.9"/>
    </reaction>
    <physiologicalReaction direction="left-to-right" evidence="1">
        <dbReference type="Rhea" id="RHEA:24810"/>
    </physiologicalReaction>
</comment>
<comment type="catalytic activity">
    <reaction evidence="1">
        <text>(2R,3R)-2,3-dihydroxy-3-methylpentanoate = (S)-3-methyl-2-oxopentanoate + H2O</text>
        <dbReference type="Rhea" id="RHEA:27694"/>
        <dbReference type="ChEBI" id="CHEBI:15377"/>
        <dbReference type="ChEBI" id="CHEBI:35146"/>
        <dbReference type="ChEBI" id="CHEBI:49258"/>
        <dbReference type="EC" id="4.2.1.9"/>
    </reaction>
    <physiologicalReaction direction="left-to-right" evidence="1">
        <dbReference type="Rhea" id="RHEA:27695"/>
    </physiologicalReaction>
</comment>
<comment type="cofactor">
    <cofactor evidence="1">
        <name>[2Fe-2S] cluster</name>
        <dbReference type="ChEBI" id="CHEBI:190135"/>
    </cofactor>
    <text evidence="1">Binds 1 [2Fe-2S] cluster per subunit. This cluster acts as a Lewis acid cofactor.</text>
</comment>
<comment type="cofactor">
    <cofactor evidence="1">
        <name>Mg(2+)</name>
        <dbReference type="ChEBI" id="CHEBI:18420"/>
    </cofactor>
</comment>
<comment type="pathway">
    <text evidence="1">Amino-acid biosynthesis; L-isoleucine biosynthesis; L-isoleucine from 2-oxobutanoate: step 3/4.</text>
</comment>
<comment type="pathway">
    <text evidence="1">Amino-acid biosynthesis; L-valine biosynthesis; L-valine from pyruvate: step 3/4.</text>
</comment>
<comment type="subunit">
    <text evidence="1">Homodimer.</text>
</comment>
<comment type="similarity">
    <text evidence="1">Belongs to the IlvD/Edd family.</text>
</comment>